<protein>
    <recommendedName>
        <fullName evidence="1">7-cyano-7-deazaguanine synthase</fullName>
        <ecNumber evidence="1">6.3.4.20</ecNumber>
    </recommendedName>
    <alternativeName>
        <fullName evidence="1">7-cyano-7-carbaguanine synthase</fullName>
    </alternativeName>
    <alternativeName>
        <fullName evidence="1">PreQ(0) synthase</fullName>
    </alternativeName>
    <alternativeName>
        <fullName evidence="1">Queuosine biosynthesis protein QueC</fullName>
    </alternativeName>
</protein>
<accession>A9AC62</accession>
<name>QUEC_BURM1</name>
<dbReference type="EC" id="6.3.4.20" evidence="1"/>
<dbReference type="EMBL" id="CP000868">
    <property type="protein sequence ID" value="ABX16800.1"/>
    <property type="molecule type" value="Genomic_DNA"/>
</dbReference>
<dbReference type="EMBL" id="AP009385">
    <property type="protein sequence ID" value="BAG42093.1"/>
    <property type="molecule type" value="Genomic_DNA"/>
</dbReference>
<dbReference type="RefSeq" id="WP_006401852.1">
    <property type="nucleotide sequence ID" value="NC_010804.1"/>
</dbReference>
<dbReference type="SMR" id="A9AC62"/>
<dbReference type="STRING" id="395019.BMULJ_00115"/>
<dbReference type="GeneID" id="89571655"/>
<dbReference type="KEGG" id="bmj:BMULJ_00115"/>
<dbReference type="KEGG" id="bmu:Bmul_3116"/>
<dbReference type="eggNOG" id="COG0603">
    <property type="taxonomic scope" value="Bacteria"/>
</dbReference>
<dbReference type="HOGENOM" id="CLU_081854_0_0_4"/>
<dbReference type="UniPathway" id="UPA00391"/>
<dbReference type="Proteomes" id="UP000008815">
    <property type="component" value="Chromosome 1"/>
</dbReference>
<dbReference type="GO" id="GO:0005524">
    <property type="term" value="F:ATP binding"/>
    <property type="evidence" value="ECO:0007669"/>
    <property type="project" value="UniProtKB-UniRule"/>
</dbReference>
<dbReference type="GO" id="GO:0016879">
    <property type="term" value="F:ligase activity, forming carbon-nitrogen bonds"/>
    <property type="evidence" value="ECO:0007669"/>
    <property type="project" value="UniProtKB-UniRule"/>
</dbReference>
<dbReference type="GO" id="GO:0008270">
    <property type="term" value="F:zinc ion binding"/>
    <property type="evidence" value="ECO:0007669"/>
    <property type="project" value="UniProtKB-UniRule"/>
</dbReference>
<dbReference type="GO" id="GO:0008616">
    <property type="term" value="P:queuosine biosynthetic process"/>
    <property type="evidence" value="ECO:0007669"/>
    <property type="project" value="UniProtKB-UniRule"/>
</dbReference>
<dbReference type="CDD" id="cd01995">
    <property type="entry name" value="QueC-like"/>
    <property type="match status" value="1"/>
</dbReference>
<dbReference type="Gene3D" id="3.40.50.620">
    <property type="entry name" value="HUPs"/>
    <property type="match status" value="1"/>
</dbReference>
<dbReference type="HAMAP" id="MF_01633">
    <property type="entry name" value="QueC"/>
    <property type="match status" value="1"/>
</dbReference>
<dbReference type="InterPro" id="IPR018317">
    <property type="entry name" value="QueC"/>
</dbReference>
<dbReference type="InterPro" id="IPR014729">
    <property type="entry name" value="Rossmann-like_a/b/a_fold"/>
</dbReference>
<dbReference type="NCBIfam" id="TIGR00364">
    <property type="entry name" value="7-cyano-7-deazaguanine synthase QueC"/>
    <property type="match status" value="1"/>
</dbReference>
<dbReference type="PANTHER" id="PTHR42914">
    <property type="entry name" value="7-CYANO-7-DEAZAGUANINE SYNTHASE"/>
    <property type="match status" value="1"/>
</dbReference>
<dbReference type="PANTHER" id="PTHR42914:SF1">
    <property type="entry name" value="7-CYANO-7-DEAZAGUANINE SYNTHASE"/>
    <property type="match status" value="1"/>
</dbReference>
<dbReference type="Pfam" id="PF06508">
    <property type="entry name" value="QueC"/>
    <property type="match status" value="1"/>
</dbReference>
<dbReference type="PIRSF" id="PIRSF006293">
    <property type="entry name" value="ExsB"/>
    <property type="match status" value="1"/>
</dbReference>
<dbReference type="SUPFAM" id="SSF52402">
    <property type="entry name" value="Adenine nucleotide alpha hydrolases-like"/>
    <property type="match status" value="1"/>
</dbReference>
<feature type="chain" id="PRO_1000186567" description="7-cyano-7-deazaguanine synthase">
    <location>
        <begin position="1"/>
        <end position="244"/>
    </location>
</feature>
<feature type="binding site" evidence="1">
    <location>
        <begin position="14"/>
        <end position="24"/>
    </location>
    <ligand>
        <name>ATP</name>
        <dbReference type="ChEBI" id="CHEBI:30616"/>
    </ligand>
</feature>
<feature type="binding site" evidence="1">
    <location>
        <position position="202"/>
    </location>
    <ligand>
        <name>Zn(2+)</name>
        <dbReference type="ChEBI" id="CHEBI:29105"/>
    </ligand>
</feature>
<feature type="binding site" evidence="1">
    <location>
        <position position="217"/>
    </location>
    <ligand>
        <name>Zn(2+)</name>
        <dbReference type="ChEBI" id="CHEBI:29105"/>
    </ligand>
</feature>
<feature type="binding site" evidence="1">
    <location>
        <position position="220"/>
    </location>
    <ligand>
        <name>Zn(2+)</name>
        <dbReference type="ChEBI" id="CHEBI:29105"/>
    </ligand>
</feature>
<feature type="binding site" evidence="1">
    <location>
        <position position="223"/>
    </location>
    <ligand>
        <name>Zn(2+)</name>
        <dbReference type="ChEBI" id="CHEBI:29105"/>
    </ligand>
</feature>
<proteinExistence type="inferred from homology"/>
<sequence length="244" mass="27138">MIRTDAKDGALVLFSGGQDSATCVAWALERYQTVETLGFDYGQRHRVELECREGVREALKRQFPAWADRLGDDHMIDLSVLGAISDTAMTRAIEIETAANGLPNTFVPGRNLLFMTIAAAIAYRRGLRVLVGGMCETDFSGYPDCRDDTMKALQVALNLGMDTRIVLETPLMWLDKAQTWQLAEQLGGQALVELIRVETHTCYVGERAELHDWGFGCGECPACKLRKRGYEAYLKGERVTEAPL</sequence>
<organism>
    <name type="scientific">Burkholderia multivorans (strain ATCC 17616 / 249)</name>
    <dbReference type="NCBI Taxonomy" id="395019"/>
    <lineage>
        <taxon>Bacteria</taxon>
        <taxon>Pseudomonadati</taxon>
        <taxon>Pseudomonadota</taxon>
        <taxon>Betaproteobacteria</taxon>
        <taxon>Burkholderiales</taxon>
        <taxon>Burkholderiaceae</taxon>
        <taxon>Burkholderia</taxon>
        <taxon>Burkholderia cepacia complex</taxon>
    </lineage>
</organism>
<comment type="function">
    <text evidence="1">Catalyzes the ATP-dependent conversion of 7-carboxy-7-deazaguanine (CDG) to 7-cyano-7-deazaguanine (preQ(0)).</text>
</comment>
<comment type="catalytic activity">
    <reaction evidence="1">
        <text>7-carboxy-7-deazaguanine + NH4(+) + ATP = 7-cyano-7-deazaguanine + ADP + phosphate + H2O + H(+)</text>
        <dbReference type="Rhea" id="RHEA:27982"/>
        <dbReference type="ChEBI" id="CHEBI:15377"/>
        <dbReference type="ChEBI" id="CHEBI:15378"/>
        <dbReference type="ChEBI" id="CHEBI:28938"/>
        <dbReference type="ChEBI" id="CHEBI:30616"/>
        <dbReference type="ChEBI" id="CHEBI:43474"/>
        <dbReference type="ChEBI" id="CHEBI:45075"/>
        <dbReference type="ChEBI" id="CHEBI:61036"/>
        <dbReference type="ChEBI" id="CHEBI:456216"/>
        <dbReference type="EC" id="6.3.4.20"/>
    </reaction>
</comment>
<comment type="cofactor">
    <cofactor evidence="1">
        <name>Zn(2+)</name>
        <dbReference type="ChEBI" id="CHEBI:29105"/>
    </cofactor>
    <text evidence="1">Binds 1 zinc ion per subunit.</text>
</comment>
<comment type="pathway">
    <text evidence="1">Purine metabolism; 7-cyano-7-deazaguanine biosynthesis.</text>
</comment>
<comment type="similarity">
    <text evidence="1">Belongs to the QueC family.</text>
</comment>
<keyword id="KW-0067">ATP-binding</keyword>
<keyword id="KW-0436">Ligase</keyword>
<keyword id="KW-0479">Metal-binding</keyword>
<keyword id="KW-0547">Nucleotide-binding</keyword>
<keyword id="KW-0671">Queuosine biosynthesis</keyword>
<keyword id="KW-1185">Reference proteome</keyword>
<keyword id="KW-0862">Zinc</keyword>
<reference key="1">
    <citation type="submission" date="2007-10" db="EMBL/GenBank/DDBJ databases">
        <title>Complete sequence of chromosome 1 of Burkholderia multivorans ATCC 17616.</title>
        <authorList>
            <person name="Copeland A."/>
            <person name="Lucas S."/>
            <person name="Lapidus A."/>
            <person name="Barry K."/>
            <person name="Glavina del Rio T."/>
            <person name="Dalin E."/>
            <person name="Tice H."/>
            <person name="Pitluck S."/>
            <person name="Chain P."/>
            <person name="Malfatti S."/>
            <person name="Shin M."/>
            <person name="Vergez L."/>
            <person name="Schmutz J."/>
            <person name="Larimer F."/>
            <person name="Land M."/>
            <person name="Hauser L."/>
            <person name="Kyrpides N."/>
            <person name="Kim E."/>
            <person name="Tiedje J."/>
            <person name="Richardson P."/>
        </authorList>
    </citation>
    <scope>NUCLEOTIDE SEQUENCE [LARGE SCALE GENOMIC DNA]</scope>
    <source>
        <strain>ATCC 17616 / 249</strain>
    </source>
</reference>
<reference key="2">
    <citation type="submission" date="2007-04" db="EMBL/GenBank/DDBJ databases">
        <title>Complete genome sequence of Burkholderia multivorans ATCC 17616.</title>
        <authorList>
            <person name="Ohtsubo Y."/>
            <person name="Yamashita A."/>
            <person name="Kurokawa K."/>
            <person name="Takami H."/>
            <person name="Yuhara S."/>
            <person name="Nishiyama E."/>
            <person name="Endo R."/>
            <person name="Miyazaki R."/>
            <person name="Ono A."/>
            <person name="Yano K."/>
            <person name="Ito M."/>
            <person name="Sota M."/>
            <person name="Yuji N."/>
            <person name="Hattori M."/>
            <person name="Tsuda M."/>
        </authorList>
    </citation>
    <scope>NUCLEOTIDE SEQUENCE [LARGE SCALE GENOMIC DNA]</scope>
    <source>
        <strain>ATCC 17616 / 249</strain>
    </source>
</reference>
<gene>
    <name evidence="1" type="primary">queC</name>
    <name type="ordered locus">Bmul_3116</name>
    <name type="ordered locus">BMULJ_00115</name>
</gene>
<evidence type="ECO:0000255" key="1">
    <source>
        <dbReference type="HAMAP-Rule" id="MF_01633"/>
    </source>
</evidence>